<accession>E1BLZ4</accession>
<sequence>MHHPFGKEEAASQKQLLGFFCECLRRGEWELAKACVPQLHEAQGDIPKKVEDILWALVLCPNQLRCGQDISPQRLAWVWLLVLEKWLALEKKLLPTGFRRKLEFLLLSEDLPSDISEDILKELYAVLAQDRVDPVLDGNLRQESWPPRLSSEAVSMLWDLLREAPQVAQALLELLLGEVDGAGLRGWPLQKALVDLIRKALRTLQGPTAAPPGTVDAIYGALRTLRCPAEPLGAELRLLCEELLEACRSEGSPLREERLLGCLLHKAGRDLVSLYSHTYAEKATPSGKVPPDPLDPERAMLALFSNPDPAHAWKVAYFYCLSNSKHFLEQILVTALTLLKEEDFPSLGCLLSREFRPLSRLLVLLGWTHCQSLASAKSLLQTLHRTQDQGCDKLLRDACDGLWAHLEVLEWCVQHSSNPIPKRDLLCHLHGGDSHSVLYSLHHLTNLPALREEDVLKLLQKVPAKDPQQEHDSADTLVPAHLSQSQSLTLYRSFCAMKYAIYALCVSSHQHSQCRQCKDGPSDDLASVAEPMNDPPSSPGASDLFSTYLARCQQYLCSIPDSLCLELLENVFSLLLITSADLHPEPHLPEDYAEDAQPERKSEQGALGTARGLAYTVPSCPKPEPKDSSPEPHGHSFLDLKHFTSSVSGFLADEFAIGAFLRLLQEQLDELSSRGPPEKPKLLEDQSGSGSRDGLQSRLHQFSKVLSEAQWRYKVVTSIQGSEEQPSRRYRPITTRHPSLRRGRRTRKSRADDQDKGSRSSLENTSSELSTSTSEGSLSAASGKNELEGRLQPQPHSSLIPMMFSPPESLLASCILRGNFAEAHQVVFTFNLKSSHGSGELMFMERYQEVIQELAQVEHKIENQNSDGGSSTIRRTGSGRSTLQAIGSAAAAGMVFYSISDVTDKLLSTSGDPIPTLQEDFWISSCPMELTAPLKEVLEDLSPPAMAAFDLACSQCQLWKTGKQLLETAERRLNSSLESQGRRLDHVFVNADGIRGFPGVLQQISKILNYPLVSAGQIKSESGEDKGGGPPRCSIAELLQMCWPSLTEDCVASHTTLSQQLEQILQSLREALELPEPRSTPLSSLVEQVAQKAPEAEAHPVYIQAQLLQKNLGKQTAAGGKQTDYMGTFFRYCSTLAAVLLRSLSSEPDHVEVKVGNPFVLLQQSSSQLVSHLLLERQVPPDRLAALLAQEGLSLSVPQVIVNCCCEPLTLCSSRQSKQTSALLTRLGTLAQLHTSRCLDDLPLSTLSCLKSTENPTLERKPPSSPRDSSPPALTSSALAFLKSRSKLLATVACLGASRGSKVTKTSLSWKELRGRREVPLTAEQVARECERLLEQFPVLEASLLAAWEPLRGSSEQGQSLASSLCGQASLSTVLLGPHSPTALDVLTEAFEEALVARDWRRALQLTDVYGQDVDDLSSIQDAVLSCAAACDKEGWQFLFAVKDACLRSQLTLQFVDRWPLEWCLEILAYCLSDTAVQDGLECELRRKLAELQVYQKILGLQSTPVWCNWQALRNCCAEDPSTVMNLILEAKEYELCEEWGCLYPIPREHLINLHQKHLLHLLERGDHEKALQQQLLQRIPDPTMCLEVTEQSLDQHPSLATSHFLANYLTTHFYGELTADRHREIQALYMGSKVLLTLPEQHRASYAHLSSSPLLMLEQLLMNMKVDWAAVAVQTLRQLLAGQEIGFTTDEVDALLSRYAGKALDFPYPLREKRSDSVIHLQEIVSQVSDLETLSRSPSAEFSSATAPGVSTVHSPSVRERNFPPSQLPLEFVPPATPPARHQWVPDESESVCMVCRRERFTMFNRRHHCRRCGRLVCSSCSTKKMVVEGCRENPTRVCDQCYSYFNQDVPEENPGQAEAPDSSKSESPPYSAVVRVPKAAEVEWILDLNEEENELVRSEFYYEQAPSASLCIAILNLHEDSVSCGHQLIEHCCRLSQGLTNPEVDAGLLTDIMKQLLFSAKMMFVKAGQSQDLALCDSYISKVDVLNILVAAAYRHVPSLDQILQPAAVTRLRNQLLEAEYYQLGVEVSTKTGLDPTGAWHAWGMACLKAGNLTAAREKFSRCLKPPFDLNQLSHGSRLVQEVVEYLESTARPLLSVQDDDFLATLKELEATLRTQSLSLEVIPEGKILNNTYYQECLFYLHSYSTHLAIISFYVRHSCLREALLHLLHTESPPEVFIEGIFQPSYKSGKLHDLENLLESIDSSLESWGKYLIAACQHLQKKNYYHILYELQQFMKDHVRAAMTCIRFFTHKAKTYTELGEKLSWLLKAKDHLKIYLQETSRRSGRKKTTFFRKKMTASDVSRHMNTLQLQMEVTRFLHRCESAGTSQVTTSPLPTLFGNNHMKMDVACKVMLGGKNVEDGFGIAFRVLQDFQLDAAATYCKAARQLVEREKFGEIRQLLKCVSESGMAAQSDRDTVLLNCVEAFRRIPPQELEGLIQAIHSDDNKVQAYLKCCKLRSAYLIAVKQEHSRAAVLVEQVQQAAKSSGDAVVQDICSQWLLTSRSRGAHGSASRK</sequence>
<name>ZFY26_BOVIN</name>
<reference key="1">
    <citation type="journal article" date="2009" name="Science">
        <title>The genome sequence of taurine cattle: a window to ruminant biology and evolution.</title>
        <authorList>
            <consortium name="The bovine genome sequencing and analysis consortium"/>
        </authorList>
    </citation>
    <scope>NUCLEOTIDE SEQUENCE [LARGE SCALE GENOMIC DNA]</scope>
</reference>
<protein>
    <recommendedName>
        <fullName>Zinc finger FYVE domain-containing protein 26</fullName>
    </recommendedName>
</protein>
<gene>
    <name type="primary">ZFYVE26</name>
</gene>
<keyword id="KW-0131">Cell cycle</keyword>
<keyword id="KW-0132">Cell division</keyword>
<keyword id="KW-0175">Coiled coil</keyword>
<keyword id="KW-0963">Cytoplasm</keyword>
<keyword id="KW-0206">Cytoskeleton</keyword>
<keyword id="KW-0227">DNA damage</keyword>
<keyword id="KW-0234">DNA repair</keyword>
<keyword id="KW-0446">Lipid-binding</keyword>
<keyword id="KW-0479">Metal-binding</keyword>
<keyword id="KW-0597">Phosphoprotein</keyword>
<keyword id="KW-1185">Reference proteome</keyword>
<keyword id="KW-0862">Zinc</keyword>
<keyword id="KW-0863">Zinc-finger</keyword>
<organism>
    <name type="scientific">Bos taurus</name>
    <name type="common">Bovine</name>
    <dbReference type="NCBI Taxonomy" id="9913"/>
    <lineage>
        <taxon>Eukaryota</taxon>
        <taxon>Metazoa</taxon>
        <taxon>Chordata</taxon>
        <taxon>Craniata</taxon>
        <taxon>Vertebrata</taxon>
        <taxon>Euteleostomi</taxon>
        <taxon>Mammalia</taxon>
        <taxon>Eutheria</taxon>
        <taxon>Laurasiatheria</taxon>
        <taxon>Artiodactyla</taxon>
        <taxon>Ruminantia</taxon>
        <taxon>Pecora</taxon>
        <taxon>Bovidae</taxon>
        <taxon>Bovinae</taxon>
        <taxon>Bos</taxon>
    </lineage>
</organism>
<dbReference type="EMBL" id="AAFC03015524">
    <property type="status" value="NOT_ANNOTATED_CDS"/>
    <property type="molecule type" value="Genomic_DNA"/>
</dbReference>
<dbReference type="EMBL" id="AAFC03064315">
    <property type="status" value="NOT_ANNOTATED_CDS"/>
    <property type="molecule type" value="Genomic_DNA"/>
</dbReference>
<dbReference type="SMR" id="E1BLZ4"/>
<dbReference type="FunCoup" id="E1BLZ4">
    <property type="interactions" value="2371"/>
</dbReference>
<dbReference type="STRING" id="9913.ENSBTAP00000040846"/>
<dbReference type="PaxDb" id="9913-ENSBTAP00000040846"/>
<dbReference type="eggNOG" id="KOG1811">
    <property type="taxonomic scope" value="Eukaryota"/>
</dbReference>
<dbReference type="HOGENOM" id="CLU_228199_0_0_1"/>
<dbReference type="InParanoid" id="E1BLZ4"/>
<dbReference type="OrthoDB" id="1936617at2759"/>
<dbReference type="TreeFam" id="TF324517"/>
<dbReference type="Proteomes" id="UP000009136">
    <property type="component" value="Unplaced"/>
</dbReference>
<dbReference type="GO" id="GO:0005813">
    <property type="term" value="C:centrosome"/>
    <property type="evidence" value="ECO:0000250"/>
    <property type="project" value="UniProtKB"/>
</dbReference>
<dbReference type="GO" id="GO:0005737">
    <property type="term" value="C:cytoplasm"/>
    <property type="evidence" value="ECO:0007669"/>
    <property type="project" value="UniProtKB-KW"/>
</dbReference>
<dbReference type="GO" id="GO:0030496">
    <property type="term" value="C:midbody"/>
    <property type="evidence" value="ECO:0000250"/>
    <property type="project" value="UniProtKB"/>
</dbReference>
<dbReference type="GO" id="GO:0032266">
    <property type="term" value="F:phosphatidylinositol-3-phosphate binding"/>
    <property type="evidence" value="ECO:0000250"/>
    <property type="project" value="UniProtKB"/>
</dbReference>
<dbReference type="GO" id="GO:0008270">
    <property type="term" value="F:zinc ion binding"/>
    <property type="evidence" value="ECO:0007669"/>
    <property type="project" value="UniProtKB-KW"/>
</dbReference>
<dbReference type="GO" id="GO:0000724">
    <property type="term" value="P:double-strand break repair via homologous recombination"/>
    <property type="evidence" value="ECO:0007669"/>
    <property type="project" value="InterPro"/>
</dbReference>
<dbReference type="GO" id="GO:0000281">
    <property type="term" value="P:mitotic cytokinesis"/>
    <property type="evidence" value="ECO:0007669"/>
    <property type="project" value="InterPro"/>
</dbReference>
<dbReference type="GO" id="GO:0032465">
    <property type="term" value="P:regulation of cytokinesis"/>
    <property type="evidence" value="ECO:0000250"/>
    <property type="project" value="UniProtKB"/>
</dbReference>
<dbReference type="CDD" id="cd15724">
    <property type="entry name" value="FYVE_ZFY26"/>
    <property type="match status" value="1"/>
</dbReference>
<dbReference type="FunFam" id="3.30.40.10:FF:000295">
    <property type="entry name" value="Zinc finger, FYVE domain-containing 26"/>
    <property type="match status" value="1"/>
</dbReference>
<dbReference type="Gene3D" id="3.30.40.10">
    <property type="entry name" value="Zinc/RING finger domain, C3HC4 (zinc finger)"/>
    <property type="match status" value="1"/>
</dbReference>
<dbReference type="InterPro" id="IPR028730">
    <property type="entry name" value="ZFYVE26"/>
</dbReference>
<dbReference type="InterPro" id="IPR000306">
    <property type="entry name" value="Znf_FYVE"/>
</dbReference>
<dbReference type="InterPro" id="IPR017455">
    <property type="entry name" value="Znf_FYVE-rel"/>
</dbReference>
<dbReference type="InterPro" id="IPR011011">
    <property type="entry name" value="Znf_FYVE_PHD"/>
</dbReference>
<dbReference type="InterPro" id="IPR013083">
    <property type="entry name" value="Znf_RING/FYVE/PHD"/>
</dbReference>
<dbReference type="PANTHER" id="PTHR46591">
    <property type="entry name" value="ZINC FINGER FYVE DOMAIN-CONTAINING PROTEIN 26"/>
    <property type="match status" value="1"/>
</dbReference>
<dbReference type="PANTHER" id="PTHR46591:SF1">
    <property type="entry name" value="ZINC FINGER FYVE DOMAIN-CONTAINING PROTEIN 26"/>
    <property type="match status" value="1"/>
</dbReference>
<dbReference type="Pfam" id="PF01363">
    <property type="entry name" value="FYVE"/>
    <property type="match status" value="1"/>
</dbReference>
<dbReference type="SMART" id="SM00064">
    <property type="entry name" value="FYVE"/>
    <property type="match status" value="1"/>
</dbReference>
<dbReference type="SUPFAM" id="SSF57903">
    <property type="entry name" value="FYVE/PHD zinc finger"/>
    <property type="match status" value="1"/>
</dbReference>
<dbReference type="PROSITE" id="PS50178">
    <property type="entry name" value="ZF_FYVE"/>
    <property type="match status" value="1"/>
</dbReference>
<comment type="function">
    <text evidence="1">Phosphatidylinositol 3-phosphate-binding protein required for the abscission step in cytokinesis: recruited to the midbody during cytokinesis and acts as a regulator of abscission. May also be required for efficient homologous recombination DNA double-strand break repair (By similarity).</text>
</comment>
<comment type="subunit">
    <text evidence="1">Interacts with AP5Z1, AP5B1, AP5S1 and SPG11. Interacts with TTC19 and KIF13A (By similarity).</text>
</comment>
<comment type="subcellular location">
    <subcellularLocation>
        <location evidence="1">Cytoplasm</location>
        <location evidence="1">Cytoskeleton</location>
        <location evidence="1">Microtubule organizing center</location>
        <location evidence="1">Centrosome</location>
    </subcellularLocation>
    <subcellularLocation>
        <location evidence="1">Midbody</location>
    </subcellularLocation>
    <text evidence="1">Localizes to the centrosome during all stages of the cell cycle. Recruited to the midbody during cytokinesis by KIF13A (By similarity).</text>
</comment>
<comment type="domain">
    <text evidence="1">The FYVE-type zinc finger mediates binding to phosphatidylinositol 3-phosphate and recruitment to the midbody during cytokinesis.</text>
</comment>
<comment type="similarity">
    <text evidence="7">Belongs to the ZFYVE26 family.</text>
</comment>
<evidence type="ECO:0000250" key="1"/>
<evidence type="ECO:0000250" key="2">
    <source>
        <dbReference type="UniProtKB" id="Q5DU37"/>
    </source>
</evidence>
<evidence type="ECO:0000250" key="3">
    <source>
        <dbReference type="UniProtKB" id="Q68DK2"/>
    </source>
</evidence>
<evidence type="ECO:0000255" key="4"/>
<evidence type="ECO:0000255" key="5">
    <source>
        <dbReference type="PROSITE-ProRule" id="PRU00091"/>
    </source>
</evidence>
<evidence type="ECO:0000256" key="6">
    <source>
        <dbReference type="SAM" id="MobiDB-lite"/>
    </source>
</evidence>
<evidence type="ECO:0000305" key="7"/>
<proteinExistence type="inferred from homology"/>
<feature type="chain" id="PRO_0000408351" description="Zinc finger FYVE domain-containing protein 26">
    <location>
        <begin position="1"/>
        <end position="2515"/>
    </location>
</feature>
<feature type="zinc finger region" description="FYVE-type" evidence="5">
    <location>
        <begin position="1788"/>
        <end position="1848"/>
    </location>
</feature>
<feature type="region of interest" description="Disordered" evidence="6">
    <location>
        <begin position="520"/>
        <end position="540"/>
    </location>
</feature>
<feature type="region of interest" description="Disordered" evidence="6">
    <location>
        <begin position="586"/>
        <end position="634"/>
    </location>
</feature>
<feature type="region of interest" description="Disordered" evidence="6">
    <location>
        <begin position="672"/>
        <end position="696"/>
    </location>
</feature>
<feature type="region of interest" description="Disordered" evidence="6">
    <location>
        <begin position="718"/>
        <end position="800"/>
    </location>
</feature>
<feature type="region of interest" description="Disordered" evidence="6">
    <location>
        <begin position="1253"/>
        <end position="1273"/>
    </location>
</feature>
<feature type="region of interest" description="Disordered" evidence="6">
    <location>
        <begin position="1740"/>
        <end position="1760"/>
    </location>
</feature>
<feature type="coiled-coil region" evidence="4">
    <location>
        <begin position="842"/>
        <end position="869"/>
    </location>
</feature>
<feature type="compositionally biased region" description="Basic and acidic residues" evidence="6">
    <location>
        <begin position="623"/>
        <end position="634"/>
    </location>
</feature>
<feature type="compositionally biased region" description="Basic residues" evidence="6">
    <location>
        <begin position="738"/>
        <end position="748"/>
    </location>
</feature>
<feature type="compositionally biased region" description="Basic and acidic residues" evidence="6">
    <location>
        <begin position="749"/>
        <end position="758"/>
    </location>
</feature>
<feature type="compositionally biased region" description="Low complexity" evidence="6">
    <location>
        <begin position="759"/>
        <end position="783"/>
    </location>
</feature>
<feature type="binding site" evidence="5">
    <location>
        <position position="1794"/>
    </location>
    <ligand>
        <name>Zn(2+)</name>
        <dbReference type="ChEBI" id="CHEBI:29105"/>
        <label>1</label>
    </ligand>
</feature>
<feature type="binding site" evidence="5">
    <location>
        <position position="1797"/>
    </location>
    <ligand>
        <name>Zn(2+)</name>
        <dbReference type="ChEBI" id="CHEBI:29105"/>
        <label>1</label>
    </ligand>
</feature>
<feature type="binding site" evidence="5">
    <location>
        <position position="1811"/>
    </location>
    <ligand>
        <name>Zn(2+)</name>
        <dbReference type="ChEBI" id="CHEBI:29105"/>
        <label>2</label>
    </ligand>
</feature>
<feature type="binding site" evidence="5">
    <location>
        <position position="1814"/>
    </location>
    <ligand>
        <name>Zn(2+)</name>
        <dbReference type="ChEBI" id="CHEBI:29105"/>
        <label>2</label>
    </ligand>
</feature>
<feature type="binding site" evidence="5">
    <location>
        <position position="1819"/>
    </location>
    <ligand>
        <name>Zn(2+)</name>
        <dbReference type="ChEBI" id="CHEBI:29105"/>
        <label>1</label>
    </ligand>
</feature>
<feature type="binding site" evidence="5">
    <location>
        <position position="1822"/>
    </location>
    <ligand>
        <name>Zn(2+)</name>
        <dbReference type="ChEBI" id="CHEBI:29105"/>
        <label>1</label>
    </ligand>
</feature>
<feature type="binding site" evidence="5">
    <location>
        <position position="1840"/>
    </location>
    <ligand>
        <name>Zn(2+)</name>
        <dbReference type="ChEBI" id="CHEBI:29105"/>
        <label>2</label>
    </ligand>
</feature>
<feature type="binding site" evidence="5">
    <location>
        <position position="1843"/>
    </location>
    <ligand>
        <name>Zn(2+)</name>
        <dbReference type="ChEBI" id="CHEBI:29105"/>
        <label>2</label>
    </ligand>
</feature>
<feature type="modified residue" description="Phosphoserine" evidence="3">
    <location>
        <position position="774"/>
    </location>
</feature>
<feature type="modified residue" description="Phosphoserine" evidence="2">
    <location>
        <position position="1718"/>
    </location>
</feature>
<feature type="modified residue" description="Phosphoserine" evidence="3">
    <location>
        <position position="1740"/>
    </location>
</feature>
<feature type="modified residue" description="Phosphoserine" evidence="2">
    <location>
        <position position="1756"/>
    </location>
</feature>
<feature type="modified residue" description="Phosphoserine" evidence="2">
    <location>
        <position position="1758"/>
    </location>
</feature>